<reference key="1">
    <citation type="journal article" date="2011" name="PLoS ONE">
        <title>The genome of Akkermansia muciniphila, a dedicated intestinal mucin degrader, and its use in exploring intestinal metagenomes.</title>
        <authorList>
            <person name="van Passel M.W."/>
            <person name="Kant R."/>
            <person name="Zoetendal E.G."/>
            <person name="Plugge C.M."/>
            <person name="Derrien M."/>
            <person name="Malfatti S.A."/>
            <person name="Chain P.S."/>
            <person name="Woyke T."/>
            <person name="Palva A."/>
            <person name="de Vos W.M."/>
            <person name="Smidt H."/>
        </authorList>
    </citation>
    <scope>NUCLEOTIDE SEQUENCE [LARGE SCALE GENOMIC DNA]</scope>
    <source>
        <strain>ATCC BAA-835 / DSM 22959 / JCM 33894 / BCRC 81048 / CCUG 64013 / CIP 107961 / Muc</strain>
    </source>
</reference>
<evidence type="ECO:0000255" key="1">
    <source>
        <dbReference type="HAMAP-Rule" id="MF_00144"/>
    </source>
</evidence>
<accession>B2UPK4</accession>
<feature type="chain" id="PRO_0000349504" description="tRNA-specific 2-thiouridylase MnmA">
    <location>
        <begin position="1"/>
        <end position="357"/>
    </location>
</feature>
<feature type="region of interest" description="Interaction with target base in tRNA" evidence="1">
    <location>
        <begin position="94"/>
        <end position="96"/>
    </location>
</feature>
<feature type="region of interest" description="Interaction with tRNA" evidence="1">
    <location>
        <begin position="145"/>
        <end position="147"/>
    </location>
</feature>
<feature type="region of interest" description="Interaction with tRNA" evidence="1">
    <location>
        <begin position="303"/>
        <end position="304"/>
    </location>
</feature>
<feature type="active site" description="Nucleophile" evidence="1">
    <location>
        <position position="99"/>
    </location>
</feature>
<feature type="active site" description="Cysteine persulfide intermediate" evidence="1">
    <location>
        <position position="195"/>
    </location>
</feature>
<feature type="binding site" evidence="1">
    <location>
        <begin position="7"/>
        <end position="14"/>
    </location>
    <ligand>
        <name>ATP</name>
        <dbReference type="ChEBI" id="CHEBI:30616"/>
    </ligand>
</feature>
<feature type="binding site" evidence="1">
    <location>
        <position position="33"/>
    </location>
    <ligand>
        <name>ATP</name>
        <dbReference type="ChEBI" id="CHEBI:30616"/>
    </ligand>
</feature>
<feature type="binding site" evidence="1">
    <location>
        <position position="123"/>
    </location>
    <ligand>
        <name>ATP</name>
        <dbReference type="ChEBI" id="CHEBI:30616"/>
    </ligand>
</feature>
<feature type="site" description="Interaction with tRNA" evidence="1">
    <location>
        <position position="124"/>
    </location>
</feature>
<feature type="site" description="Interaction with tRNA" evidence="1">
    <location>
        <position position="336"/>
    </location>
</feature>
<feature type="disulfide bond" description="Alternate" evidence="1">
    <location>
        <begin position="99"/>
        <end position="195"/>
    </location>
</feature>
<sequence length="357" mass="39372">MARILVGLSGGVDSSVAAALLVEQGHDVVGAYMKNWVNDEGIPGECPWEQDIQDALAVAKTTGIEFRVIDLVDEYRARIVNYLIEGYRAGYTPNPDVLCNREMKFGVFLDYALEQGFDYVATGHYARRMDTPQGAFILRGRDPNKDQSYFLSLMRPDQIARAVFPLGDLLKPEVRVLAEKYGLPTARKKDSQGICFIGQVKMSDFLRHYLPDKPGNIVDTEGRTLGTHNGLHLFTMGQRKGHGVASPREGVAYVVVGKDVRRNRLILGYEDASTRGLYASRAVVGGISNTLAPLPARVMAQPRYRAKAEWASCEYLEEGKVRLGFDTPLRALAVGQVCAFYDGGKLLGGGFFESIEP</sequence>
<comment type="function">
    <text evidence="1">Catalyzes the 2-thiolation of uridine at the wobble position (U34) of tRNA, leading to the formation of s(2)U34.</text>
</comment>
<comment type="catalytic activity">
    <reaction evidence="1">
        <text>S-sulfanyl-L-cysteinyl-[protein] + uridine(34) in tRNA + AH2 + ATP = 2-thiouridine(34) in tRNA + L-cysteinyl-[protein] + A + AMP + diphosphate + H(+)</text>
        <dbReference type="Rhea" id="RHEA:47032"/>
        <dbReference type="Rhea" id="RHEA-COMP:10131"/>
        <dbReference type="Rhea" id="RHEA-COMP:11726"/>
        <dbReference type="Rhea" id="RHEA-COMP:11727"/>
        <dbReference type="Rhea" id="RHEA-COMP:11728"/>
        <dbReference type="ChEBI" id="CHEBI:13193"/>
        <dbReference type="ChEBI" id="CHEBI:15378"/>
        <dbReference type="ChEBI" id="CHEBI:17499"/>
        <dbReference type="ChEBI" id="CHEBI:29950"/>
        <dbReference type="ChEBI" id="CHEBI:30616"/>
        <dbReference type="ChEBI" id="CHEBI:33019"/>
        <dbReference type="ChEBI" id="CHEBI:61963"/>
        <dbReference type="ChEBI" id="CHEBI:65315"/>
        <dbReference type="ChEBI" id="CHEBI:87170"/>
        <dbReference type="ChEBI" id="CHEBI:456215"/>
        <dbReference type="EC" id="2.8.1.13"/>
    </reaction>
</comment>
<comment type="subcellular location">
    <subcellularLocation>
        <location evidence="1">Cytoplasm</location>
    </subcellularLocation>
</comment>
<comment type="similarity">
    <text evidence="1">Belongs to the MnmA/TRMU family.</text>
</comment>
<dbReference type="EC" id="2.8.1.13" evidence="1"/>
<dbReference type="EMBL" id="CP001071">
    <property type="protein sequence ID" value="ACD04481.1"/>
    <property type="molecule type" value="Genomic_DNA"/>
</dbReference>
<dbReference type="RefSeq" id="WP_012419696.1">
    <property type="nucleotide sequence ID" value="NC_010655.1"/>
</dbReference>
<dbReference type="SMR" id="B2UPK4"/>
<dbReference type="STRING" id="349741.Amuc_0644"/>
<dbReference type="PaxDb" id="349741-Amuc_0644"/>
<dbReference type="KEGG" id="amu:Amuc_0644"/>
<dbReference type="eggNOG" id="COG0482">
    <property type="taxonomic scope" value="Bacteria"/>
</dbReference>
<dbReference type="HOGENOM" id="CLU_035188_1_0_0"/>
<dbReference type="OrthoDB" id="9800696at2"/>
<dbReference type="BioCyc" id="AMUC349741:G1GBX-702-MONOMER"/>
<dbReference type="Proteomes" id="UP000001031">
    <property type="component" value="Chromosome"/>
</dbReference>
<dbReference type="GO" id="GO:0005737">
    <property type="term" value="C:cytoplasm"/>
    <property type="evidence" value="ECO:0007669"/>
    <property type="project" value="UniProtKB-SubCell"/>
</dbReference>
<dbReference type="GO" id="GO:0005524">
    <property type="term" value="F:ATP binding"/>
    <property type="evidence" value="ECO:0007669"/>
    <property type="project" value="UniProtKB-KW"/>
</dbReference>
<dbReference type="GO" id="GO:0000049">
    <property type="term" value="F:tRNA binding"/>
    <property type="evidence" value="ECO:0007669"/>
    <property type="project" value="UniProtKB-KW"/>
</dbReference>
<dbReference type="GO" id="GO:0103016">
    <property type="term" value="F:tRNA-uridine 2-sulfurtransferase activity"/>
    <property type="evidence" value="ECO:0007669"/>
    <property type="project" value="UniProtKB-EC"/>
</dbReference>
<dbReference type="GO" id="GO:0002143">
    <property type="term" value="P:tRNA wobble position uridine thiolation"/>
    <property type="evidence" value="ECO:0007669"/>
    <property type="project" value="TreeGrafter"/>
</dbReference>
<dbReference type="CDD" id="cd01998">
    <property type="entry name" value="MnmA_TRMU-like"/>
    <property type="match status" value="1"/>
</dbReference>
<dbReference type="Gene3D" id="2.30.30.280">
    <property type="entry name" value="Adenine nucleotide alpha hydrolases-like domains"/>
    <property type="match status" value="1"/>
</dbReference>
<dbReference type="Gene3D" id="3.40.50.620">
    <property type="entry name" value="HUPs"/>
    <property type="match status" value="1"/>
</dbReference>
<dbReference type="Gene3D" id="2.40.30.10">
    <property type="entry name" value="Translation factors"/>
    <property type="match status" value="1"/>
</dbReference>
<dbReference type="HAMAP" id="MF_00144">
    <property type="entry name" value="tRNA_thiouridyl_MnmA"/>
    <property type="match status" value="1"/>
</dbReference>
<dbReference type="InterPro" id="IPR004506">
    <property type="entry name" value="MnmA-like"/>
</dbReference>
<dbReference type="InterPro" id="IPR046885">
    <property type="entry name" value="MnmA-like_C"/>
</dbReference>
<dbReference type="InterPro" id="IPR046884">
    <property type="entry name" value="MnmA-like_central"/>
</dbReference>
<dbReference type="InterPro" id="IPR023382">
    <property type="entry name" value="MnmA-like_central_sf"/>
</dbReference>
<dbReference type="InterPro" id="IPR014729">
    <property type="entry name" value="Rossmann-like_a/b/a_fold"/>
</dbReference>
<dbReference type="NCBIfam" id="NF001138">
    <property type="entry name" value="PRK00143.1"/>
    <property type="match status" value="1"/>
</dbReference>
<dbReference type="NCBIfam" id="TIGR00420">
    <property type="entry name" value="trmU"/>
    <property type="match status" value="1"/>
</dbReference>
<dbReference type="PANTHER" id="PTHR11933:SF5">
    <property type="entry name" value="MITOCHONDRIAL TRNA-SPECIFIC 2-THIOURIDYLASE 1"/>
    <property type="match status" value="1"/>
</dbReference>
<dbReference type="PANTHER" id="PTHR11933">
    <property type="entry name" value="TRNA 5-METHYLAMINOMETHYL-2-THIOURIDYLATE -METHYLTRANSFERASE"/>
    <property type="match status" value="1"/>
</dbReference>
<dbReference type="Pfam" id="PF03054">
    <property type="entry name" value="tRNA_Me_trans"/>
    <property type="match status" value="1"/>
</dbReference>
<dbReference type="Pfam" id="PF20258">
    <property type="entry name" value="tRNA_Me_trans_C"/>
    <property type="match status" value="1"/>
</dbReference>
<dbReference type="Pfam" id="PF20259">
    <property type="entry name" value="tRNA_Me_trans_M"/>
    <property type="match status" value="1"/>
</dbReference>
<dbReference type="SUPFAM" id="SSF52402">
    <property type="entry name" value="Adenine nucleotide alpha hydrolases-like"/>
    <property type="match status" value="1"/>
</dbReference>
<keyword id="KW-0067">ATP-binding</keyword>
<keyword id="KW-0963">Cytoplasm</keyword>
<keyword id="KW-1015">Disulfide bond</keyword>
<keyword id="KW-0547">Nucleotide-binding</keyword>
<keyword id="KW-1185">Reference proteome</keyword>
<keyword id="KW-0694">RNA-binding</keyword>
<keyword id="KW-0808">Transferase</keyword>
<keyword id="KW-0819">tRNA processing</keyword>
<keyword id="KW-0820">tRNA-binding</keyword>
<proteinExistence type="inferred from homology"/>
<name>MNMA_AKKM8</name>
<gene>
    <name evidence="1" type="primary">mnmA</name>
    <name type="ordered locus">Amuc_0644</name>
</gene>
<protein>
    <recommendedName>
        <fullName evidence="1">tRNA-specific 2-thiouridylase MnmA</fullName>
        <ecNumber evidence="1">2.8.1.13</ecNumber>
    </recommendedName>
</protein>
<organism>
    <name type="scientific">Akkermansia muciniphila (strain ATCC BAA-835 / DSM 22959 / JCM 33894 / BCRC 81048 / CCUG 64013 / CIP 107961 / Muc)</name>
    <dbReference type="NCBI Taxonomy" id="349741"/>
    <lineage>
        <taxon>Bacteria</taxon>
        <taxon>Pseudomonadati</taxon>
        <taxon>Verrucomicrobiota</taxon>
        <taxon>Verrucomicrobiia</taxon>
        <taxon>Verrucomicrobiales</taxon>
        <taxon>Akkermansiaceae</taxon>
        <taxon>Akkermansia</taxon>
    </lineage>
</organism>